<name>SCAM5_MOUSE</name>
<accession>Q9JKD3</accession>
<proteinExistence type="evidence at protein level"/>
<sequence>MAEKVNNFPPLPKFIPLKPCFYQDFEADIPPQHLSLTKRLYYLWMLNSVTLAVNLVGCLAWLIGGGGATNFGLAFLWLILFTPCSYVCWFRPIYKAFKTDSSFSFMAFFFTFMAQLVISIIQAVGIPGWGVCGWIATISFFGTNIGSAVVMLIPTVMFTVVAVFSFIALSMVHKFYRGSGGSFSKAQEEWTTGAWKNPHVQQAAQNAAMGAAQGAMNQPQTQYSATPNYTYSNEM</sequence>
<keyword id="KW-1003">Cell membrane</keyword>
<keyword id="KW-0968">Cytoplasmic vesicle</keyword>
<keyword id="KW-0967">Endosome</keyword>
<keyword id="KW-0268">Exocytosis</keyword>
<keyword id="KW-0333">Golgi apparatus</keyword>
<keyword id="KW-0472">Membrane</keyword>
<keyword id="KW-0653">Protein transport</keyword>
<keyword id="KW-1185">Reference proteome</keyword>
<keyword id="KW-0770">Synapse</keyword>
<keyword id="KW-0812">Transmembrane</keyword>
<keyword id="KW-1133">Transmembrane helix</keyword>
<keyword id="KW-0813">Transport</keyword>
<gene>
    <name type="primary">Scamp5</name>
</gene>
<dbReference type="EMBL" id="AF241833">
    <property type="protein sequence ID" value="AAF64491.1"/>
    <property type="molecule type" value="mRNA"/>
</dbReference>
<dbReference type="EMBL" id="BC018613">
    <property type="protein sequence ID" value="AAH18613.1"/>
    <property type="molecule type" value="mRNA"/>
</dbReference>
<dbReference type="CCDS" id="CCDS40649.1"/>
<dbReference type="RefSeq" id="NP_001288563.1">
    <property type="nucleotide sequence ID" value="NM_001301634.1"/>
</dbReference>
<dbReference type="RefSeq" id="NP_001288564.1">
    <property type="nucleotide sequence ID" value="NM_001301635.1"/>
</dbReference>
<dbReference type="RefSeq" id="NP_064666.1">
    <property type="nucleotide sequence ID" value="NM_020270.3"/>
</dbReference>
<dbReference type="RefSeq" id="XP_006511383.1">
    <property type="nucleotide sequence ID" value="XM_006511320.3"/>
</dbReference>
<dbReference type="RefSeq" id="XP_017168984.1">
    <property type="nucleotide sequence ID" value="XM_017313495.1"/>
</dbReference>
<dbReference type="SMR" id="Q9JKD3"/>
<dbReference type="BioGRID" id="208182">
    <property type="interactions" value="6"/>
</dbReference>
<dbReference type="FunCoup" id="Q9JKD3">
    <property type="interactions" value="679"/>
</dbReference>
<dbReference type="STRING" id="10090.ENSMUSP00000035898"/>
<dbReference type="GlyGen" id="Q9JKD3">
    <property type="glycosylation" value="2 sites, 1 O-linked glycan (2 sites)"/>
</dbReference>
<dbReference type="iPTMnet" id="Q9JKD3"/>
<dbReference type="PhosphoSitePlus" id="Q9JKD3"/>
<dbReference type="SwissPalm" id="Q9JKD3"/>
<dbReference type="PaxDb" id="10090-ENSMUSP00000035898"/>
<dbReference type="PeptideAtlas" id="Q9JKD3"/>
<dbReference type="ProteomicsDB" id="255355"/>
<dbReference type="Antibodypedia" id="27182">
    <property type="antibodies" value="57 antibodies from 15 providers"/>
</dbReference>
<dbReference type="DNASU" id="56807"/>
<dbReference type="Ensembl" id="ENSMUST00000046587.8">
    <property type="protein sequence ID" value="ENSMUSP00000035898.7"/>
    <property type="gene ID" value="ENSMUSG00000040722.8"/>
</dbReference>
<dbReference type="Ensembl" id="ENSMUST00000214256.2">
    <property type="protein sequence ID" value="ENSMUSP00000150867.2"/>
    <property type="gene ID" value="ENSMUSG00000040722.8"/>
</dbReference>
<dbReference type="GeneID" id="56807"/>
<dbReference type="KEGG" id="mmu:56807"/>
<dbReference type="UCSC" id="uc009puw.2">
    <property type="organism name" value="mouse"/>
</dbReference>
<dbReference type="AGR" id="MGI:1928948"/>
<dbReference type="CTD" id="192683"/>
<dbReference type="MGI" id="MGI:1928948">
    <property type="gene designation" value="Scamp5"/>
</dbReference>
<dbReference type="VEuPathDB" id="HostDB:ENSMUSG00000040722"/>
<dbReference type="eggNOG" id="KOG3088">
    <property type="taxonomic scope" value="Eukaryota"/>
</dbReference>
<dbReference type="GeneTree" id="ENSGT00940000157577"/>
<dbReference type="HOGENOM" id="CLU_066546_1_0_1"/>
<dbReference type="InParanoid" id="Q9JKD3"/>
<dbReference type="OMA" id="TWPVGWI"/>
<dbReference type="OrthoDB" id="242866at2759"/>
<dbReference type="PhylomeDB" id="Q9JKD3"/>
<dbReference type="TreeFam" id="TF313797"/>
<dbReference type="BioGRID-ORCS" id="56807">
    <property type="hits" value="1 hit in 78 CRISPR screens"/>
</dbReference>
<dbReference type="ChiTaRS" id="Scamp5">
    <property type="organism name" value="mouse"/>
</dbReference>
<dbReference type="PRO" id="PR:Q9JKD3"/>
<dbReference type="Proteomes" id="UP000000589">
    <property type="component" value="Chromosome 9"/>
</dbReference>
<dbReference type="RNAct" id="Q9JKD3">
    <property type="molecule type" value="protein"/>
</dbReference>
<dbReference type="Bgee" id="ENSMUSG00000040722">
    <property type="expression patterns" value="Expressed in retinal neural layer and 207 other cell types or tissues"/>
</dbReference>
<dbReference type="ExpressionAtlas" id="Q9JKD3">
    <property type="expression patterns" value="baseline and differential"/>
</dbReference>
<dbReference type="GO" id="GO:0000139">
    <property type="term" value="C:Golgi membrane"/>
    <property type="evidence" value="ECO:0000250"/>
    <property type="project" value="UniProtKB"/>
</dbReference>
<dbReference type="GO" id="GO:0005886">
    <property type="term" value="C:plasma membrane"/>
    <property type="evidence" value="ECO:0000250"/>
    <property type="project" value="UniProtKB"/>
</dbReference>
<dbReference type="GO" id="GO:0055038">
    <property type="term" value="C:recycling endosome membrane"/>
    <property type="evidence" value="ECO:0007669"/>
    <property type="project" value="UniProtKB-SubCell"/>
</dbReference>
<dbReference type="GO" id="GO:0008021">
    <property type="term" value="C:synaptic vesicle"/>
    <property type="evidence" value="ECO:0000250"/>
    <property type="project" value="MGI"/>
</dbReference>
<dbReference type="GO" id="GO:0030672">
    <property type="term" value="C:synaptic vesicle membrane"/>
    <property type="evidence" value="ECO:0007669"/>
    <property type="project" value="UniProtKB-SubCell"/>
</dbReference>
<dbReference type="GO" id="GO:0032588">
    <property type="term" value="C:trans-Golgi network membrane"/>
    <property type="evidence" value="ECO:0007669"/>
    <property type="project" value="Ensembl"/>
</dbReference>
<dbReference type="GO" id="GO:0044877">
    <property type="term" value="F:protein-containing complex binding"/>
    <property type="evidence" value="ECO:0007669"/>
    <property type="project" value="Ensembl"/>
</dbReference>
<dbReference type="GO" id="GO:0006887">
    <property type="term" value="P:exocytosis"/>
    <property type="evidence" value="ECO:0007669"/>
    <property type="project" value="UniProtKB-KW"/>
</dbReference>
<dbReference type="GO" id="GO:0045806">
    <property type="term" value="P:negative regulation of endocytosis"/>
    <property type="evidence" value="ECO:0007669"/>
    <property type="project" value="Ensembl"/>
</dbReference>
<dbReference type="GO" id="GO:0045956">
    <property type="term" value="P:positive regulation of calcium ion-dependent exocytosis"/>
    <property type="evidence" value="ECO:0000250"/>
    <property type="project" value="UniProtKB"/>
</dbReference>
<dbReference type="GO" id="GO:0001819">
    <property type="term" value="P:positive regulation of cytokine production"/>
    <property type="evidence" value="ECO:0000250"/>
    <property type="project" value="UniProtKB"/>
</dbReference>
<dbReference type="GO" id="GO:0015031">
    <property type="term" value="P:protein transport"/>
    <property type="evidence" value="ECO:0007669"/>
    <property type="project" value="UniProtKB-KW"/>
</dbReference>
<dbReference type="GO" id="GO:0034976">
    <property type="term" value="P:response to endoplasmic reticulum stress"/>
    <property type="evidence" value="ECO:0007669"/>
    <property type="project" value="Ensembl"/>
</dbReference>
<dbReference type="InterPro" id="IPR007273">
    <property type="entry name" value="SCAMP"/>
</dbReference>
<dbReference type="PANTHER" id="PTHR10687:SF5">
    <property type="entry name" value="SECRETORY CARRIER-ASSOCIATED MEMBRANE PROTEIN 5"/>
    <property type="match status" value="1"/>
</dbReference>
<dbReference type="PANTHER" id="PTHR10687">
    <property type="entry name" value="SECRETORY CARRIER-ASSOCIATED MEMBRANE PROTEIN SCAMP"/>
    <property type="match status" value="1"/>
</dbReference>
<dbReference type="Pfam" id="PF04144">
    <property type="entry name" value="SCAMP"/>
    <property type="match status" value="1"/>
</dbReference>
<protein>
    <recommendedName>
        <fullName>Secretory carrier-associated membrane protein 5</fullName>
        <shortName>Secretory carrier membrane protein 5</shortName>
    </recommendedName>
</protein>
<evidence type="ECO:0000250" key="1"/>
<evidence type="ECO:0000255" key="2"/>
<evidence type="ECO:0000269" key="3">
    <source>
    </source>
</evidence>
<evidence type="ECO:0000305" key="4"/>
<feature type="chain" id="PRO_0000191263" description="Secretory carrier-associated membrane protein 5">
    <location>
        <begin position="1"/>
        <end position="235"/>
    </location>
</feature>
<feature type="topological domain" description="Cytoplasmic" evidence="2">
    <location>
        <begin position="1"/>
        <end position="39"/>
    </location>
</feature>
<feature type="transmembrane region" description="Helical" evidence="2">
    <location>
        <begin position="40"/>
        <end position="60"/>
    </location>
</feature>
<feature type="topological domain" description="Extracellular" evidence="2">
    <location>
        <begin position="61"/>
        <end position="67"/>
    </location>
</feature>
<feature type="transmembrane region" description="Helical" evidence="2">
    <location>
        <begin position="68"/>
        <end position="88"/>
    </location>
</feature>
<feature type="topological domain" description="Cytoplasmic" evidence="2">
    <location>
        <begin position="89"/>
        <end position="102"/>
    </location>
</feature>
<feature type="transmembrane region" description="Helical" evidence="2">
    <location>
        <begin position="103"/>
        <end position="125"/>
    </location>
</feature>
<feature type="topological domain" description="Extracellular" evidence="2">
    <location>
        <begin position="126"/>
        <end position="148"/>
    </location>
</feature>
<feature type="transmembrane region" description="Helical" evidence="2">
    <location>
        <begin position="149"/>
        <end position="169"/>
    </location>
</feature>
<feature type="topological domain" description="Cytoplasmic" evidence="2">
    <location>
        <begin position="170"/>
        <end position="235"/>
    </location>
</feature>
<organism>
    <name type="scientific">Mus musculus</name>
    <name type="common">Mouse</name>
    <dbReference type="NCBI Taxonomy" id="10090"/>
    <lineage>
        <taxon>Eukaryota</taxon>
        <taxon>Metazoa</taxon>
        <taxon>Chordata</taxon>
        <taxon>Craniata</taxon>
        <taxon>Vertebrata</taxon>
        <taxon>Euteleostomi</taxon>
        <taxon>Mammalia</taxon>
        <taxon>Eutheria</taxon>
        <taxon>Euarchontoglires</taxon>
        <taxon>Glires</taxon>
        <taxon>Rodentia</taxon>
        <taxon>Myomorpha</taxon>
        <taxon>Muroidea</taxon>
        <taxon>Muridae</taxon>
        <taxon>Murinae</taxon>
        <taxon>Mus</taxon>
        <taxon>Mus</taxon>
    </lineage>
</organism>
<reference key="1">
    <citation type="journal article" date="2000" name="J. Neurosci.">
        <title>Novel SCAMPs lacking NPF repeats: ubiquitous and synaptic vesicle-specific forms implicate SCAMPs in multiple membrane-trafficking functions.</title>
        <authorList>
            <person name="Fernandez-Chacon R."/>
            <person name="Suedhof T.C."/>
        </authorList>
    </citation>
    <scope>NUCLEOTIDE SEQUENCE [MRNA]</scope>
    <scope>TISSUE SPECIFICITY</scope>
    <scope>SUBCELLULAR LOCATION</scope>
</reference>
<reference key="2">
    <citation type="journal article" date="2004" name="Genome Res.">
        <title>The status, quality, and expansion of the NIH full-length cDNA project: the Mammalian Gene Collection (MGC).</title>
        <authorList>
            <consortium name="The MGC Project Team"/>
        </authorList>
    </citation>
    <scope>NUCLEOTIDE SEQUENCE [LARGE SCALE MRNA]</scope>
    <source>
        <tissue>Retina</tissue>
    </source>
</reference>
<reference key="3">
    <citation type="journal article" date="2010" name="Cell">
        <title>A tissue-specific atlas of mouse protein phosphorylation and expression.</title>
        <authorList>
            <person name="Huttlin E.L."/>
            <person name="Jedrychowski M.P."/>
            <person name="Elias J.E."/>
            <person name="Goswami T."/>
            <person name="Rad R."/>
            <person name="Beausoleil S.A."/>
            <person name="Villen J."/>
            <person name="Haas W."/>
            <person name="Sowa M.E."/>
            <person name="Gygi S.P."/>
        </authorList>
    </citation>
    <scope>IDENTIFICATION BY MASS SPECTROMETRY [LARGE SCALE ANALYSIS]</scope>
    <source>
        <tissue>Brain</tissue>
    </source>
</reference>
<comment type="function">
    <text evidence="1">Required for the calcium-dependent exocytosis of signal sequence-containing cytokines such as CCL5. Probably acts in cooperation with the SNARE machinery (By similarity).</text>
</comment>
<comment type="subunit">
    <text evidence="1">Interacts (via C-terminal part) with SYT1 and SYT2; interaction with synaptotagmins making a link with the SNARE molecules. Interacts with SLC9A7 (By similarity).</text>
</comment>
<comment type="subcellular location">
    <subcellularLocation>
        <location evidence="3">Cell membrane</location>
        <topology evidence="3">Multi-pass membrane protein</topology>
    </subcellularLocation>
    <subcellularLocation>
        <location evidence="1">Golgi apparatus membrane</location>
        <topology evidence="1">Multi-pass membrane protein</topology>
    </subcellularLocation>
    <subcellularLocation>
        <location evidence="1">Golgi apparatus</location>
        <location evidence="1">trans-Golgi network membrane</location>
        <topology evidence="1">Multi-pass membrane protein</topology>
    </subcellularLocation>
    <subcellularLocation>
        <location evidence="1">Recycling endosome membrane</location>
        <topology evidence="1">Multi-pass membrane protein</topology>
    </subcellularLocation>
    <subcellularLocation>
        <location evidence="3">Cytoplasmic vesicle</location>
        <location evidence="3">Secretory vesicle</location>
        <location evidence="3">Synaptic vesicle membrane</location>
        <topology evidence="3">Multi-pass membrane protein</topology>
    </subcellularLocation>
    <text evidence="1">Mainly localizes in Golgi apparatus membrane. Upon calcium-triggered exocytosis, it translocates to the cell membrane. Highly enriched in synaptic vesicles (By similarity).</text>
</comment>
<comment type="tissue specificity">
    <text evidence="3">Brain-specific.</text>
</comment>
<comment type="developmental stage">
    <text>Expressed late in development coincident with the elaboration of mature synapses.</text>
</comment>
<comment type="similarity">
    <text evidence="4">Belongs to the SCAMP family. SCAMP5 subfamily.</text>
</comment>